<dbReference type="EC" id="2.6.1.9" evidence="1"/>
<dbReference type="EMBL" id="CP000249">
    <property type="protein sequence ID" value="ABD12383.1"/>
    <property type="molecule type" value="Genomic_DNA"/>
</dbReference>
<dbReference type="RefSeq" id="WP_011437411.1">
    <property type="nucleotide sequence ID" value="NZ_MSEA01000300.1"/>
</dbReference>
<dbReference type="SMR" id="Q2J8K9"/>
<dbReference type="STRING" id="106370.Francci3_3026"/>
<dbReference type="KEGG" id="fra:Francci3_3026"/>
<dbReference type="eggNOG" id="COG0079">
    <property type="taxonomic scope" value="Bacteria"/>
</dbReference>
<dbReference type="HOGENOM" id="CLU_017584_3_1_11"/>
<dbReference type="OrthoDB" id="9809616at2"/>
<dbReference type="PhylomeDB" id="Q2J8K9"/>
<dbReference type="UniPathway" id="UPA00031">
    <property type="reaction ID" value="UER00012"/>
</dbReference>
<dbReference type="Proteomes" id="UP000001937">
    <property type="component" value="Chromosome"/>
</dbReference>
<dbReference type="GO" id="GO:0004400">
    <property type="term" value="F:histidinol-phosphate transaminase activity"/>
    <property type="evidence" value="ECO:0007669"/>
    <property type="project" value="UniProtKB-UniRule"/>
</dbReference>
<dbReference type="GO" id="GO:0030170">
    <property type="term" value="F:pyridoxal phosphate binding"/>
    <property type="evidence" value="ECO:0007669"/>
    <property type="project" value="InterPro"/>
</dbReference>
<dbReference type="GO" id="GO:0000105">
    <property type="term" value="P:L-histidine biosynthetic process"/>
    <property type="evidence" value="ECO:0007669"/>
    <property type="project" value="UniProtKB-UniRule"/>
</dbReference>
<dbReference type="CDD" id="cd00609">
    <property type="entry name" value="AAT_like"/>
    <property type="match status" value="1"/>
</dbReference>
<dbReference type="Gene3D" id="3.90.1150.10">
    <property type="entry name" value="Aspartate Aminotransferase, domain 1"/>
    <property type="match status" value="1"/>
</dbReference>
<dbReference type="Gene3D" id="3.40.640.10">
    <property type="entry name" value="Type I PLP-dependent aspartate aminotransferase-like (Major domain)"/>
    <property type="match status" value="1"/>
</dbReference>
<dbReference type="HAMAP" id="MF_01023">
    <property type="entry name" value="HisC_aminotrans_2"/>
    <property type="match status" value="1"/>
</dbReference>
<dbReference type="InterPro" id="IPR001917">
    <property type="entry name" value="Aminotrans_II_pyridoxalP_BS"/>
</dbReference>
<dbReference type="InterPro" id="IPR004839">
    <property type="entry name" value="Aminotransferase_I/II_large"/>
</dbReference>
<dbReference type="InterPro" id="IPR005861">
    <property type="entry name" value="HisP_aminotrans"/>
</dbReference>
<dbReference type="InterPro" id="IPR015424">
    <property type="entry name" value="PyrdxlP-dep_Trfase"/>
</dbReference>
<dbReference type="InterPro" id="IPR015421">
    <property type="entry name" value="PyrdxlP-dep_Trfase_major"/>
</dbReference>
<dbReference type="InterPro" id="IPR015422">
    <property type="entry name" value="PyrdxlP-dep_Trfase_small"/>
</dbReference>
<dbReference type="NCBIfam" id="TIGR01141">
    <property type="entry name" value="hisC"/>
    <property type="match status" value="1"/>
</dbReference>
<dbReference type="NCBIfam" id="NF002877">
    <property type="entry name" value="PRK03317.1"/>
    <property type="match status" value="1"/>
</dbReference>
<dbReference type="PANTHER" id="PTHR42885:SF2">
    <property type="entry name" value="HISTIDINOL-PHOSPHATE AMINOTRANSFERASE"/>
    <property type="match status" value="1"/>
</dbReference>
<dbReference type="PANTHER" id="PTHR42885">
    <property type="entry name" value="HISTIDINOL-PHOSPHATE AMINOTRANSFERASE-RELATED"/>
    <property type="match status" value="1"/>
</dbReference>
<dbReference type="Pfam" id="PF00155">
    <property type="entry name" value="Aminotran_1_2"/>
    <property type="match status" value="1"/>
</dbReference>
<dbReference type="SUPFAM" id="SSF53383">
    <property type="entry name" value="PLP-dependent transferases"/>
    <property type="match status" value="1"/>
</dbReference>
<dbReference type="PROSITE" id="PS00599">
    <property type="entry name" value="AA_TRANSFER_CLASS_2"/>
    <property type="match status" value="1"/>
</dbReference>
<keyword id="KW-0028">Amino-acid biosynthesis</keyword>
<keyword id="KW-0032">Aminotransferase</keyword>
<keyword id="KW-0368">Histidine biosynthesis</keyword>
<keyword id="KW-0663">Pyridoxal phosphate</keyword>
<keyword id="KW-1185">Reference proteome</keyword>
<keyword id="KW-0808">Transferase</keyword>
<evidence type="ECO:0000255" key="1">
    <source>
        <dbReference type="HAMAP-Rule" id="MF_01023"/>
    </source>
</evidence>
<name>HIS8_FRACC</name>
<organism>
    <name type="scientific">Frankia casuarinae (strain DSM 45818 / CECT 9043 / HFP020203 / CcI3)</name>
    <dbReference type="NCBI Taxonomy" id="106370"/>
    <lineage>
        <taxon>Bacteria</taxon>
        <taxon>Bacillati</taxon>
        <taxon>Actinomycetota</taxon>
        <taxon>Actinomycetes</taxon>
        <taxon>Frankiales</taxon>
        <taxon>Frankiaceae</taxon>
        <taxon>Frankia</taxon>
    </lineage>
</organism>
<accession>Q2J8K9</accession>
<reference key="1">
    <citation type="journal article" date="2007" name="Genome Res.">
        <title>Genome characteristics of facultatively symbiotic Frankia sp. strains reflect host range and host plant biogeography.</title>
        <authorList>
            <person name="Normand P."/>
            <person name="Lapierre P."/>
            <person name="Tisa L.S."/>
            <person name="Gogarten J.P."/>
            <person name="Alloisio N."/>
            <person name="Bagnarol E."/>
            <person name="Bassi C.A."/>
            <person name="Berry A.M."/>
            <person name="Bickhart D.M."/>
            <person name="Choisne N."/>
            <person name="Couloux A."/>
            <person name="Cournoyer B."/>
            <person name="Cruveiller S."/>
            <person name="Daubin V."/>
            <person name="Demange N."/>
            <person name="Francino M.P."/>
            <person name="Goltsman E."/>
            <person name="Huang Y."/>
            <person name="Kopp O.R."/>
            <person name="Labarre L."/>
            <person name="Lapidus A."/>
            <person name="Lavire C."/>
            <person name="Marechal J."/>
            <person name="Martinez M."/>
            <person name="Mastronunzio J.E."/>
            <person name="Mullin B.C."/>
            <person name="Niemann J."/>
            <person name="Pujic P."/>
            <person name="Rawnsley T."/>
            <person name="Rouy Z."/>
            <person name="Schenowitz C."/>
            <person name="Sellstedt A."/>
            <person name="Tavares F."/>
            <person name="Tomkins J.P."/>
            <person name="Vallenet D."/>
            <person name="Valverde C."/>
            <person name="Wall L.G."/>
            <person name="Wang Y."/>
            <person name="Medigue C."/>
            <person name="Benson D.R."/>
        </authorList>
    </citation>
    <scope>NUCLEOTIDE SEQUENCE [LARGE SCALE GENOMIC DNA]</scope>
    <source>
        <strain>DSM 45818 / CECT 9043 / HFP020203 / CcI3</strain>
    </source>
</reference>
<proteinExistence type="inferred from homology"/>
<gene>
    <name evidence="1" type="primary">hisC</name>
    <name type="ordered locus">Francci3_3026</name>
</gene>
<protein>
    <recommendedName>
        <fullName evidence="1">Histidinol-phosphate aminotransferase</fullName>
        <ecNumber evidence="1">2.6.1.9</ecNumber>
    </recommendedName>
    <alternativeName>
        <fullName evidence="1">Imidazole acetol-phosphate transaminase</fullName>
    </alternativeName>
</protein>
<sequence length="397" mass="42037">MIFKAAGSGAEDRPWRPWDADGLPLRDSLRGLSPYGAPQLDVPVRLNTNENPHPPSVGLVDAIGKAAALAATEANRYPDRDAEALRADLAYYLTPDAGFGVHTSQVWAANGSNEILQQLLQAFGGPGRVALGFEPSYSMHRLIALATATEWVAGQRAEDFTLSPAVVTDAIARHRPALVFLCSPNNPTGTALPPEVVAAACEAVEATGSGMVVVDEAYAEFRRAGVPSTLTLLPRHPRLVVTRTMSKAFALAGARVGYLAAHPAVVDSLYLVRLPYHLSSFTQAVARTALAHADELLGTVEAVKAQRDRIVRELPALGLRLAPSDANFVFFGRFADQRAVWQSLLDAGVLVRDVGLTGWLRVTAGLPNEVDAFLGALGRTLTGSVIGADGVISLATA</sequence>
<comment type="catalytic activity">
    <reaction evidence="1">
        <text>L-histidinol phosphate + 2-oxoglutarate = 3-(imidazol-4-yl)-2-oxopropyl phosphate + L-glutamate</text>
        <dbReference type="Rhea" id="RHEA:23744"/>
        <dbReference type="ChEBI" id="CHEBI:16810"/>
        <dbReference type="ChEBI" id="CHEBI:29985"/>
        <dbReference type="ChEBI" id="CHEBI:57766"/>
        <dbReference type="ChEBI" id="CHEBI:57980"/>
        <dbReference type="EC" id="2.6.1.9"/>
    </reaction>
</comment>
<comment type="cofactor">
    <cofactor evidence="1">
        <name>pyridoxal 5'-phosphate</name>
        <dbReference type="ChEBI" id="CHEBI:597326"/>
    </cofactor>
</comment>
<comment type="pathway">
    <text evidence="1">Amino-acid biosynthesis; L-histidine biosynthesis; L-histidine from 5-phospho-alpha-D-ribose 1-diphosphate: step 7/9.</text>
</comment>
<comment type="subunit">
    <text evidence="1">Homodimer.</text>
</comment>
<comment type="similarity">
    <text evidence="1">Belongs to the class-II pyridoxal-phosphate-dependent aminotransferase family. Histidinol-phosphate aminotransferase subfamily.</text>
</comment>
<feature type="chain" id="PRO_0000319759" description="Histidinol-phosphate aminotransferase">
    <location>
        <begin position="1"/>
        <end position="397"/>
    </location>
</feature>
<feature type="modified residue" description="N6-(pyridoxal phosphate)lysine" evidence="1">
    <location>
        <position position="247"/>
    </location>
</feature>